<keyword id="KW-0249">Electron transport</keyword>
<keyword id="KW-0472">Membrane</keyword>
<keyword id="KW-1185">Reference proteome</keyword>
<keyword id="KW-0732">Signal</keyword>
<keyword id="KW-0812">Transmembrane</keyword>
<keyword id="KW-1133">Transmembrane helix</keyword>
<keyword id="KW-0813">Transport</keyword>
<sequence length="255" mass="28605">MFLSSRTIFVGLCFLFVLAPCFTRATTNEVQVSCDSHNFNNGKHFRSCVDLPVLDSFLHYSYVRETGVLEVAYRHTNIESSSWIAWGINPTSKGMIGAQTLLAYRNSTSGFMRAYTSSINGYTPMLQEGPLSFRVTQLSAEYLNREMTIFATMVWPSNTTVVNHLWQDGPLKEGDRLGMHAMSGNHLKSMANLDLLSGQVMTTKAANDNMLLVKSIHGLVNAVCWGIFIPIGVMAARYMRTYKGLDPTWFYILIL</sequence>
<name>B561Q_ARATH</name>
<protein>
    <recommendedName>
        <fullName>Cytochrome b561 and DOMON domain-containing protein At5g48750</fullName>
    </recommendedName>
    <alternativeName>
        <fullName>Protein b561A.tha17</fullName>
    </alternativeName>
</protein>
<reference key="1">
    <citation type="journal article" date="1998" name="DNA Res.">
        <title>Structural analysis of Arabidopsis thaliana chromosome 5. VI. Sequence features of the regions of 1,367,185 bp covered by 19 physically assigned P1 and TAC clones.</title>
        <authorList>
            <person name="Kotani H."/>
            <person name="Nakamura Y."/>
            <person name="Sato S."/>
            <person name="Asamizu E."/>
            <person name="Kaneko T."/>
            <person name="Miyajima N."/>
            <person name="Tabata S."/>
        </authorList>
    </citation>
    <scope>NUCLEOTIDE SEQUENCE [LARGE SCALE GENOMIC DNA]</scope>
    <source>
        <strain>cv. Columbia</strain>
    </source>
</reference>
<reference key="2">
    <citation type="journal article" date="2017" name="Plant J.">
        <title>Araport11: a complete reannotation of the Arabidopsis thaliana reference genome.</title>
        <authorList>
            <person name="Cheng C.Y."/>
            <person name="Krishnakumar V."/>
            <person name="Chan A.P."/>
            <person name="Thibaud-Nissen F."/>
            <person name="Schobel S."/>
            <person name="Town C.D."/>
        </authorList>
    </citation>
    <scope>GENOME REANNOTATION</scope>
    <source>
        <strain>cv. Columbia</strain>
    </source>
</reference>
<reference key="3">
    <citation type="submission" date="2005-05" db="EMBL/GenBank/DDBJ databases">
        <authorList>
            <person name="Underwood B.A."/>
            <person name="Xiao Y.-L."/>
            <person name="Moskal W.A. Jr."/>
            <person name="Monaghan E.L."/>
            <person name="Wang W."/>
            <person name="Redman J.C."/>
            <person name="Wu H.C."/>
            <person name="Utterback T."/>
            <person name="Town C.D."/>
        </authorList>
    </citation>
    <scope>NUCLEOTIDE SEQUENCE [LARGE SCALE MRNA]</scope>
    <source>
        <strain>cv. Columbia</strain>
    </source>
</reference>
<reference key="4">
    <citation type="journal article" date="2004" name="J. Plant Physiol.">
        <title>Analysis of an Arabidopsis thaliana protein family, structurally related to cytochromes b561 and potentially involved in catecholamine biochemistry in plants.</title>
        <authorList>
            <person name="Verelst W."/>
            <person name="Asard H."/>
        </authorList>
    </citation>
    <scope>DOMAIN</scope>
</reference>
<reference key="5">
    <citation type="journal article" date="2005" name="Biochim. Biophys. Acta">
        <title>Cytochrome b561 protein family: expanding roles and versatile transmembrane electron transfer abilities as predicted by a new classification system and protein sequence motif analyses.</title>
        <authorList>
            <person name="Tsubaki M."/>
            <person name="Takeuchi F."/>
            <person name="Nakanishi N."/>
        </authorList>
    </citation>
    <scope>GENE FAMILY</scope>
    <scope>NOMENCLATURE</scope>
</reference>
<reference key="6">
    <citation type="journal article" date="2009" name="Plant Physiol.">
        <title>Auxin-responsive genes AIR12 code for a new family of plasma membrane b-type cytochromes specific to flowering plants.</title>
        <authorList>
            <person name="Preger V."/>
            <person name="Tango N."/>
            <person name="Marchand C."/>
            <person name="Lemaire S.D."/>
            <person name="Carbonera D."/>
            <person name="Di Valentin M."/>
            <person name="Costa A."/>
            <person name="Pupillo P."/>
            <person name="Trost P."/>
        </authorList>
    </citation>
    <scope>DOMAIN</scope>
</reference>
<reference key="7">
    <citation type="journal article" date="2013" name="Antioxid. Redox Signal.">
        <title>Cytochromes b561: ascorbate-mediated trans-membrane electron transport.</title>
        <authorList>
            <person name="Asard H."/>
            <person name="Barbaro R."/>
            <person name="Trost P."/>
            <person name="Berczi A."/>
        </authorList>
    </citation>
    <scope>REVIEW</scope>
</reference>
<feature type="signal peptide" evidence="1">
    <location>
        <begin position="1"/>
        <end position="27"/>
    </location>
</feature>
<feature type="chain" id="PRO_0000430484" description="Cytochrome b561 and DOMON domain-containing protein At5g48750">
    <location>
        <begin position="28"/>
        <end position="255"/>
    </location>
</feature>
<feature type="transmembrane region" description="Helical" evidence="1">
    <location>
        <begin position="216"/>
        <end position="236"/>
    </location>
</feature>
<feature type="domain" description="DOMON" evidence="3">
    <location>
        <begin position="54"/>
        <end position="169"/>
    </location>
</feature>
<feature type="domain" description="Cytochrome b561" evidence="2">
    <location>
        <begin position="176"/>
        <end position="255"/>
    </location>
</feature>
<organism>
    <name type="scientific">Arabidopsis thaliana</name>
    <name type="common">Mouse-ear cress</name>
    <dbReference type="NCBI Taxonomy" id="3702"/>
    <lineage>
        <taxon>Eukaryota</taxon>
        <taxon>Viridiplantae</taxon>
        <taxon>Streptophyta</taxon>
        <taxon>Embryophyta</taxon>
        <taxon>Tracheophyta</taxon>
        <taxon>Spermatophyta</taxon>
        <taxon>Magnoliopsida</taxon>
        <taxon>eudicotyledons</taxon>
        <taxon>Gunneridae</taxon>
        <taxon>Pentapetalae</taxon>
        <taxon>rosids</taxon>
        <taxon>malvids</taxon>
        <taxon>Brassicales</taxon>
        <taxon>Brassicaceae</taxon>
        <taxon>Camelineae</taxon>
        <taxon>Arabidopsis</taxon>
    </lineage>
</organism>
<comment type="subcellular location">
    <subcellularLocation>
        <location evidence="6">Membrane</location>
        <topology evidence="6">Single-pass membrane protein</topology>
    </subcellularLocation>
</comment>
<comment type="domain">
    <text evidence="4 5">DOMON domain could bind catecholamines (PubMed:15022831). DOMON domain could bind one heme b (PubMed:19386804).</text>
</comment>
<comment type="caution">
    <text evidence="6">Lacks the C-terminal part of the cytochrome b561 domain, which contains the residues coordinating the two heme molecules and 4 of the 6 conserved transmembrane regions.</text>
</comment>
<proteinExistence type="evidence at transcript level"/>
<evidence type="ECO:0000255" key="1"/>
<evidence type="ECO:0000255" key="2">
    <source>
        <dbReference type="PROSITE-ProRule" id="PRU00242"/>
    </source>
</evidence>
<evidence type="ECO:0000255" key="3">
    <source>
        <dbReference type="PROSITE-ProRule" id="PRU00246"/>
    </source>
</evidence>
<evidence type="ECO:0000269" key="4">
    <source>
    </source>
</evidence>
<evidence type="ECO:0000269" key="5">
    <source>
    </source>
</evidence>
<evidence type="ECO:0000305" key="6"/>
<dbReference type="EMBL" id="AB012242">
    <property type="protein sequence ID" value="BAB09428.1"/>
    <property type="molecule type" value="Genomic_DNA"/>
</dbReference>
<dbReference type="EMBL" id="CP002688">
    <property type="protein sequence ID" value="AED95719.1"/>
    <property type="molecule type" value="Genomic_DNA"/>
</dbReference>
<dbReference type="EMBL" id="DQ056711">
    <property type="protein sequence ID" value="AAY78857.1"/>
    <property type="molecule type" value="mRNA"/>
</dbReference>
<dbReference type="RefSeq" id="NP_199686.1">
    <property type="nucleotide sequence ID" value="NM_124252.1"/>
</dbReference>
<dbReference type="STRING" id="3702.Q9FKC1"/>
<dbReference type="PaxDb" id="3702-AT5G48750.1"/>
<dbReference type="EnsemblPlants" id="AT5G48750.1">
    <property type="protein sequence ID" value="AT5G48750.1"/>
    <property type="gene ID" value="AT5G48750"/>
</dbReference>
<dbReference type="GeneID" id="834933"/>
<dbReference type="Gramene" id="AT5G48750.1">
    <property type="protein sequence ID" value="AT5G48750.1"/>
    <property type="gene ID" value="AT5G48750"/>
</dbReference>
<dbReference type="KEGG" id="ath:AT5G48750"/>
<dbReference type="Araport" id="AT5G48750"/>
<dbReference type="TAIR" id="AT5G48750"/>
<dbReference type="eggNOG" id="KOG4293">
    <property type="taxonomic scope" value="Eukaryota"/>
</dbReference>
<dbReference type="HOGENOM" id="CLU_036675_2_0_1"/>
<dbReference type="InParanoid" id="Q9FKC1"/>
<dbReference type="OMA" id="VLHWTYY"/>
<dbReference type="OrthoDB" id="19261at2759"/>
<dbReference type="PhylomeDB" id="Q9FKC1"/>
<dbReference type="PRO" id="PR:Q9FKC1"/>
<dbReference type="Proteomes" id="UP000006548">
    <property type="component" value="Chromosome 5"/>
</dbReference>
<dbReference type="ExpressionAtlas" id="Q9FKC1">
    <property type="expression patterns" value="differential"/>
</dbReference>
<dbReference type="GO" id="GO:0016020">
    <property type="term" value="C:membrane"/>
    <property type="evidence" value="ECO:0007669"/>
    <property type="project" value="UniProtKB-SubCell"/>
</dbReference>
<dbReference type="CDD" id="cd09629">
    <property type="entry name" value="DOMON_CIL1_like"/>
    <property type="match status" value="1"/>
</dbReference>
<dbReference type="InterPro" id="IPR045265">
    <property type="entry name" value="AIR12_DOMON"/>
</dbReference>
<dbReference type="InterPro" id="IPR006593">
    <property type="entry name" value="Cyt_b561/ferric_Rdtase_TM"/>
</dbReference>
<dbReference type="InterPro" id="IPR005018">
    <property type="entry name" value="DOMON_domain"/>
</dbReference>
<dbReference type="InterPro" id="IPR017214">
    <property type="entry name" value="UCP037471"/>
</dbReference>
<dbReference type="PANTHER" id="PTHR23130">
    <property type="entry name" value="CYTOCHROME B561 AND DOMON DOMAIN-CONTAINING PROTEIN"/>
    <property type="match status" value="1"/>
</dbReference>
<dbReference type="PANTHER" id="PTHR23130:SF174">
    <property type="entry name" value="CYTOCHROME B561 AND DOMON DOMAIN-CONTAINING PROTEIN"/>
    <property type="match status" value="1"/>
</dbReference>
<dbReference type="Pfam" id="PF04526">
    <property type="entry name" value="DUF568"/>
    <property type="match status" value="1"/>
</dbReference>
<dbReference type="PIRSF" id="PIRSF037471">
    <property type="entry name" value="UCP037471"/>
    <property type="match status" value="1"/>
</dbReference>
<dbReference type="PROSITE" id="PS50939">
    <property type="entry name" value="CYTOCHROME_B561"/>
    <property type="match status" value="1"/>
</dbReference>
<dbReference type="PROSITE" id="PS50836">
    <property type="entry name" value="DOMON"/>
    <property type="match status" value="1"/>
</dbReference>
<gene>
    <name type="ordered locus">At5g48750</name>
    <name type="ORF">K24G6.8</name>
</gene>
<accession>Q9FKC1</accession>